<feature type="chain" id="PRO_0000426964" description="Chaperonin GroEL 1">
    <location>
        <begin position="1"/>
        <end position="539"/>
    </location>
</feature>
<feature type="binding site" evidence="1">
    <location>
        <begin position="29"/>
        <end position="32"/>
    </location>
    <ligand>
        <name>ATP</name>
        <dbReference type="ChEBI" id="CHEBI:30616"/>
    </ligand>
</feature>
<feature type="binding site" evidence="1">
    <location>
        <begin position="86"/>
        <end position="90"/>
    </location>
    <ligand>
        <name>ATP</name>
        <dbReference type="ChEBI" id="CHEBI:30616"/>
    </ligand>
</feature>
<feature type="binding site" evidence="1">
    <location>
        <position position="413"/>
    </location>
    <ligand>
        <name>ATP</name>
        <dbReference type="ChEBI" id="CHEBI:30616"/>
    </ligand>
</feature>
<feature type="binding site" evidence="1">
    <location>
        <position position="495"/>
    </location>
    <ligand>
        <name>ATP</name>
        <dbReference type="ChEBI" id="CHEBI:30616"/>
    </ligand>
</feature>
<protein>
    <recommendedName>
        <fullName evidence="1">Chaperonin GroEL 1</fullName>
        <ecNumber evidence="1">5.6.1.7</ecNumber>
    </recommendedName>
    <alternativeName>
        <fullName evidence="1">60 kDa chaperonin 1</fullName>
    </alternativeName>
    <alternativeName>
        <fullName evidence="1">Chaperonin-60 1</fullName>
        <shortName evidence="1">Cpn60 1</shortName>
    </alternativeName>
</protein>
<evidence type="ECO:0000255" key="1">
    <source>
        <dbReference type="HAMAP-Rule" id="MF_00600"/>
    </source>
</evidence>
<name>CH601_MYCTO</name>
<accession>P9WPE8</accession>
<accession>L0TCP9</accession>
<accession>P0A518</accession>
<accession>Q59573</accession>
<accession>Q59581</accession>
<sequence>MSKLIEYDETARRAMEVGMDKLADTVRVTLGPRGRHVVLAKAFGGPTVTNDGVTVAREIELEDPFEDLGAQLVKSVATKTNDVAGDGTTTATILAQALIKGGLRLVAAGVNPIALGVGIGKAADAVSEALLASATPVSGKTGIAQVATVSSRDEQIGDLVGEAMSKVGHDGVVSVEESSTLGTELEFTEGIGFDKGFLSAYFVTDFDNQQAVLEDALILLHQDKISSLPDLLPLLEKVAGTGKPLLIVAEDVEGEALATLVVNAIRKTLKAVAVKGPYFGDRRKAFLEDLAVVTGGQVVNPDAGMVLREVGLEVLGSARRVVVSKDDTVIVDGGGTAEAVANRAKHLRAEIDKSDSDWDREKLGERLAKLAGGVAVIKVGAATETALKERKESVEDAVAAAKAAVEEGIVPGGGASLIHQARKALTELRASLTGDEVLGVDVFSEALAAPLFWIAANAGLDGSVVVNKVSELPAGHGLNVNTLSYGDLAADGVIDPVKVTRSAVLNASSVARMVLTTETVVVDKPAKAEDHDHHHGHAH</sequence>
<organism>
    <name type="scientific">Mycobacterium tuberculosis (strain CDC 1551 / Oshkosh)</name>
    <dbReference type="NCBI Taxonomy" id="83331"/>
    <lineage>
        <taxon>Bacteria</taxon>
        <taxon>Bacillati</taxon>
        <taxon>Actinomycetota</taxon>
        <taxon>Actinomycetes</taxon>
        <taxon>Mycobacteriales</taxon>
        <taxon>Mycobacteriaceae</taxon>
        <taxon>Mycobacterium</taxon>
        <taxon>Mycobacterium tuberculosis complex</taxon>
    </lineage>
</organism>
<reference key="1">
    <citation type="journal article" date="2002" name="J. Bacteriol.">
        <title>Whole-genome comparison of Mycobacterium tuberculosis clinical and laboratory strains.</title>
        <authorList>
            <person name="Fleischmann R.D."/>
            <person name="Alland D."/>
            <person name="Eisen J.A."/>
            <person name="Carpenter L."/>
            <person name="White O."/>
            <person name="Peterson J.D."/>
            <person name="DeBoy R.T."/>
            <person name="Dodson R.J."/>
            <person name="Gwinn M.L."/>
            <person name="Haft D.H."/>
            <person name="Hickey E.K."/>
            <person name="Kolonay J.F."/>
            <person name="Nelson W.C."/>
            <person name="Umayam L.A."/>
            <person name="Ermolaeva M.D."/>
            <person name="Salzberg S.L."/>
            <person name="Delcher A."/>
            <person name="Utterback T.R."/>
            <person name="Weidman J.F."/>
            <person name="Khouri H.M."/>
            <person name="Gill J."/>
            <person name="Mikula A."/>
            <person name="Bishai W."/>
            <person name="Jacobs W.R. Jr."/>
            <person name="Venter J.C."/>
            <person name="Fraser C.M."/>
        </authorList>
    </citation>
    <scope>NUCLEOTIDE SEQUENCE [LARGE SCALE GENOMIC DNA]</scope>
    <source>
        <strain>CDC 1551 / Oshkosh</strain>
    </source>
</reference>
<dbReference type="EC" id="5.6.1.7" evidence="1"/>
<dbReference type="EMBL" id="AE000516">
    <property type="protein sequence ID" value="AAK47864.1"/>
    <property type="molecule type" value="Genomic_DNA"/>
</dbReference>
<dbReference type="PIR" id="F70737">
    <property type="entry name" value="F70737"/>
</dbReference>
<dbReference type="SMR" id="P9WPE8"/>
<dbReference type="KEGG" id="mtc:MT3526"/>
<dbReference type="PATRIC" id="fig|83331.31.peg.3783"/>
<dbReference type="HOGENOM" id="CLU_016503_3_0_11"/>
<dbReference type="Proteomes" id="UP000001020">
    <property type="component" value="Chromosome"/>
</dbReference>
<dbReference type="GO" id="GO:0005737">
    <property type="term" value="C:cytoplasm"/>
    <property type="evidence" value="ECO:0007669"/>
    <property type="project" value="UniProtKB-SubCell"/>
</dbReference>
<dbReference type="GO" id="GO:0005524">
    <property type="term" value="F:ATP binding"/>
    <property type="evidence" value="ECO:0007669"/>
    <property type="project" value="UniProtKB-UniRule"/>
</dbReference>
<dbReference type="GO" id="GO:0140662">
    <property type="term" value="F:ATP-dependent protein folding chaperone"/>
    <property type="evidence" value="ECO:0007669"/>
    <property type="project" value="InterPro"/>
</dbReference>
<dbReference type="GO" id="GO:0016853">
    <property type="term" value="F:isomerase activity"/>
    <property type="evidence" value="ECO:0007669"/>
    <property type="project" value="UniProtKB-KW"/>
</dbReference>
<dbReference type="GO" id="GO:0051082">
    <property type="term" value="F:unfolded protein binding"/>
    <property type="evidence" value="ECO:0007669"/>
    <property type="project" value="UniProtKB-UniRule"/>
</dbReference>
<dbReference type="GO" id="GO:0042026">
    <property type="term" value="P:protein refolding"/>
    <property type="evidence" value="ECO:0007669"/>
    <property type="project" value="UniProtKB-UniRule"/>
</dbReference>
<dbReference type="CDD" id="cd03344">
    <property type="entry name" value="GroEL"/>
    <property type="match status" value="1"/>
</dbReference>
<dbReference type="FunFam" id="3.50.7.10:FF:000001">
    <property type="entry name" value="60 kDa chaperonin"/>
    <property type="match status" value="1"/>
</dbReference>
<dbReference type="Gene3D" id="3.50.7.10">
    <property type="entry name" value="GroEL"/>
    <property type="match status" value="1"/>
</dbReference>
<dbReference type="Gene3D" id="1.10.560.10">
    <property type="entry name" value="GroEL-like equatorial domain"/>
    <property type="match status" value="1"/>
</dbReference>
<dbReference type="Gene3D" id="3.30.260.10">
    <property type="entry name" value="TCP-1-like chaperonin intermediate domain"/>
    <property type="match status" value="1"/>
</dbReference>
<dbReference type="HAMAP" id="MF_00600">
    <property type="entry name" value="CH60"/>
    <property type="match status" value="1"/>
</dbReference>
<dbReference type="InterPro" id="IPR018370">
    <property type="entry name" value="Chaperonin_Cpn60_CS"/>
</dbReference>
<dbReference type="InterPro" id="IPR001844">
    <property type="entry name" value="Cpn60/GroEL"/>
</dbReference>
<dbReference type="InterPro" id="IPR002423">
    <property type="entry name" value="Cpn60/GroEL/TCP-1"/>
</dbReference>
<dbReference type="InterPro" id="IPR027409">
    <property type="entry name" value="GroEL-like_apical_dom_sf"/>
</dbReference>
<dbReference type="InterPro" id="IPR027413">
    <property type="entry name" value="GROEL-like_equatorial_sf"/>
</dbReference>
<dbReference type="InterPro" id="IPR027410">
    <property type="entry name" value="TCP-1-like_intermed_sf"/>
</dbReference>
<dbReference type="NCBIfam" id="TIGR02348">
    <property type="entry name" value="GroEL"/>
    <property type="match status" value="1"/>
</dbReference>
<dbReference type="NCBIfam" id="NF000592">
    <property type="entry name" value="PRK00013.1"/>
    <property type="match status" value="1"/>
</dbReference>
<dbReference type="NCBIfam" id="NF009487">
    <property type="entry name" value="PRK12849.1"/>
    <property type="match status" value="1"/>
</dbReference>
<dbReference type="NCBIfam" id="NF009488">
    <property type="entry name" value="PRK12850.1"/>
    <property type="match status" value="1"/>
</dbReference>
<dbReference type="NCBIfam" id="NF009489">
    <property type="entry name" value="PRK12851.1"/>
    <property type="match status" value="1"/>
</dbReference>
<dbReference type="PANTHER" id="PTHR45633">
    <property type="entry name" value="60 KDA HEAT SHOCK PROTEIN, MITOCHONDRIAL"/>
    <property type="match status" value="1"/>
</dbReference>
<dbReference type="Pfam" id="PF00118">
    <property type="entry name" value="Cpn60_TCP1"/>
    <property type="match status" value="1"/>
</dbReference>
<dbReference type="PRINTS" id="PR00298">
    <property type="entry name" value="CHAPERONIN60"/>
</dbReference>
<dbReference type="SUPFAM" id="SSF52029">
    <property type="entry name" value="GroEL apical domain-like"/>
    <property type="match status" value="1"/>
</dbReference>
<dbReference type="SUPFAM" id="SSF48592">
    <property type="entry name" value="GroEL equatorial domain-like"/>
    <property type="match status" value="1"/>
</dbReference>
<dbReference type="SUPFAM" id="SSF54849">
    <property type="entry name" value="GroEL-intermediate domain like"/>
    <property type="match status" value="1"/>
</dbReference>
<dbReference type="PROSITE" id="PS00296">
    <property type="entry name" value="CHAPERONINS_CPN60"/>
    <property type="match status" value="1"/>
</dbReference>
<keyword id="KW-0067">ATP-binding</keyword>
<keyword id="KW-0143">Chaperone</keyword>
<keyword id="KW-0963">Cytoplasm</keyword>
<keyword id="KW-0413">Isomerase</keyword>
<keyword id="KW-0547">Nucleotide-binding</keyword>
<keyword id="KW-1185">Reference proteome</keyword>
<comment type="function">
    <text evidence="1">Together with its co-chaperonin GroES, plays an essential role in assisting protein folding. The GroEL-GroES system forms a nano-cage that allows encapsulation of the non-native substrate proteins and provides a physical environment optimized to promote and accelerate protein folding.</text>
</comment>
<comment type="catalytic activity">
    <reaction evidence="1">
        <text>ATP + H2O + a folded polypeptide = ADP + phosphate + an unfolded polypeptide.</text>
        <dbReference type="EC" id="5.6.1.7"/>
    </reaction>
</comment>
<comment type="subunit">
    <text evidence="1">Forms a cylinder of 14 subunits composed of two heptameric rings stacked back-to-back. Interacts with the co-chaperonin GroES.</text>
</comment>
<comment type="subcellular location">
    <subcellularLocation>
        <location evidence="1">Cytoplasm</location>
    </subcellularLocation>
</comment>
<comment type="similarity">
    <text evidence="1">Belongs to the chaperonin (HSP60) family.</text>
</comment>
<proteinExistence type="inferred from homology"/>
<gene>
    <name evidence="1" type="primary">groEL1</name>
    <name evidence="1" type="synonym">groL1</name>
    <name type="ordered locus">MT3526</name>
</gene>